<dbReference type="EC" id="2.3.1.129" evidence="1"/>
<dbReference type="EMBL" id="AE014291">
    <property type="protein sequence ID" value="AAN30071.1"/>
    <property type="molecule type" value="Genomic_DNA"/>
</dbReference>
<dbReference type="EMBL" id="CP002997">
    <property type="protein sequence ID" value="AEM18489.1"/>
    <property type="molecule type" value="Genomic_DNA"/>
</dbReference>
<dbReference type="RefSeq" id="WP_002964279.1">
    <property type="nucleotide sequence ID" value="NZ_KN046804.1"/>
</dbReference>
<dbReference type="SMR" id="P65321"/>
<dbReference type="GeneID" id="97533598"/>
<dbReference type="KEGG" id="bms:BR1151"/>
<dbReference type="KEGG" id="bsi:BS1330_I1147"/>
<dbReference type="PATRIC" id="fig|204722.21.peg.1965"/>
<dbReference type="HOGENOM" id="CLU_061249_0_0_5"/>
<dbReference type="PhylomeDB" id="P65321"/>
<dbReference type="UniPathway" id="UPA00359">
    <property type="reaction ID" value="UER00477"/>
</dbReference>
<dbReference type="Proteomes" id="UP000007104">
    <property type="component" value="Chromosome I"/>
</dbReference>
<dbReference type="GO" id="GO:0005737">
    <property type="term" value="C:cytoplasm"/>
    <property type="evidence" value="ECO:0007669"/>
    <property type="project" value="UniProtKB-SubCell"/>
</dbReference>
<dbReference type="GO" id="GO:0016020">
    <property type="term" value="C:membrane"/>
    <property type="evidence" value="ECO:0007669"/>
    <property type="project" value="GOC"/>
</dbReference>
<dbReference type="GO" id="GO:0008780">
    <property type="term" value="F:acyl-[acyl-carrier-protein]-UDP-N-acetylglucosamine O-acyltransferase activity"/>
    <property type="evidence" value="ECO:0007669"/>
    <property type="project" value="UniProtKB-UniRule"/>
</dbReference>
<dbReference type="GO" id="GO:0009245">
    <property type="term" value="P:lipid A biosynthetic process"/>
    <property type="evidence" value="ECO:0007669"/>
    <property type="project" value="UniProtKB-UniRule"/>
</dbReference>
<dbReference type="CDD" id="cd03351">
    <property type="entry name" value="LbH_UDP-GlcNAc_AT"/>
    <property type="match status" value="1"/>
</dbReference>
<dbReference type="Gene3D" id="2.160.10.10">
    <property type="entry name" value="Hexapeptide repeat proteins"/>
    <property type="match status" value="1"/>
</dbReference>
<dbReference type="Gene3D" id="1.20.1180.10">
    <property type="entry name" value="Udp N-acetylglucosamine O-acyltransferase, C-terminal domain"/>
    <property type="match status" value="1"/>
</dbReference>
<dbReference type="HAMAP" id="MF_00387">
    <property type="entry name" value="LpxA"/>
    <property type="match status" value="1"/>
</dbReference>
<dbReference type="InterPro" id="IPR029098">
    <property type="entry name" value="Acetyltransf_C"/>
</dbReference>
<dbReference type="InterPro" id="IPR037157">
    <property type="entry name" value="Acetyltransf_C_sf"/>
</dbReference>
<dbReference type="InterPro" id="IPR001451">
    <property type="entry name" value="Hexapep"/>
</dbReference>
<dbReference type="InterPro" id="IPR018357">
    <property type="entry name" value="Hexapep_transf_CS"/>
</dbReference>
<dbReference type="InterPro" id="IPR010137">
    <property type="entry name" value="Lipid_A_LpxA"/>
</dbReference>
<dbReference type="InterPro" id="IPR011004">
    <property type="entry name" value="Trimer_LpxA-like_sf"/>
</dbReference>
<dbReference type="NCBIfam" id="TIGR01852">
    <property type="entry name" value="lipid_A_lpxA"/>
    <property type="match status" value="1"/>
</dbReference>
<dbReference type="NCBIfam" id="NF003657">
    <property type="entry name" value="PRK05289.1"/>
    <property type="match status" value="1"/>
</dbReference>
<dbReference type="PANTHER" id="PTHR43480">
    <property type="entry name" value="ACYL-[ACYL-CARRIER-PROTEIN]--UDP-N-ACETYLGLUCOSAMINE O-ACYLTRANSFERASE"/>
    <property type="match status" value="1"/>
</dbReference>
<dbReference type="PANTHER" id="PTHR43480:SF1">
    <property type="entry name" value="ACYL-[ACYL-CARRIER-PROTEIN]--UDP-N-ACETYLGLUCOSAMINE O-ACYLTRANSFERASE, MITOCHONDRIAL-RELATED"/>
    <property type="match status" value="1"/>
</dbReference>
<dbReference type="Pfam" id="PF13720">
    <property type="entry name" value="Acetyltransf_11"/>
    <property type="match status" value="1"/>
</dbReference>
<dbReference type="Pfam" id="PF00132">
    <property type="entry name" value="Hexapep"/>
    <property type="match status" value="2"/>
</dbReference>
<dbReference type="PIRSF" id="PIRSF000456">
    <property type="entry name" value="UDP-GlcNAc_acltr"/>
    <property type="match status" value="1"/>
</dbReference>
<dbReference type="SUPFAM" id="SSF51161">
    <property type="entry name" value="Trimeric LpxA-like enzymes"/>
    <property type="match status" value="1"/>
</dbReference>
<dbReference type="PROSITE" id="PS00101">
    <property type="entry name" value="HEXAPEP_TRANSFERASES"/>
    <property type="match status" value="1"/>
</dbReference>
<reference key="1">
    <citation type="journal article" date="2002" name="Proc. Natl. Acad. Sci. U.S.A.">
        <title>The Brucella suis genome reveals fundamental similarities between animal and plant pathogens and symbionts.</title>
        <authorList>
            <person name="Paulsen I.T."/>
            <person name="Seshadri R."/>
            <person name="Nelson K.E."/>
            <person name="Eisen J.A."/>
            <person name="Heidelberg J.F."/>
            <person name="Read T.D."/>
            <person name="Dodson R.J."/>
            <person name="Umayam L.A."/>
            <person name="Brinkac L.M."/>
            <person name="Beanan M.J."/>
            <person name="Daugherty S.C."/>
            <person name="DeBoy R.T."/>
            <person name="Durkin A.S."/>
            <person name="Kolonay J.F."/>
            <person name="Madupu R."/>
            <person name="Nelson W.C."/>
            <person name="Ayodeji B."/>
            <person name="Kraul M."/>
            <person name="Shetty J."/>
            <person name="Malek J.A."/>
            <person name="Van Aken S.E."/>
            <person name="Riedmuller S."/>
            <person name="Tettelin H."/>
            <person name="Gill S.R."/>
            <person name="White O."/>
            <person name="Salzberg S.L."/>
            <person name="Hoover D.L."/>
            <person name="Lindler L.E."/>
            <person name="Halling S.M."/>
            <person name="Boyle S.M."/>
            <person name="Fraser C.M."/>
        </authorList>
    </citation>
    <scope>NUCLEOTIDE SEQUENCE [LARGE SCALE GENOMIC DNA]</scope>
    <source>
        <strain>1330</strain>
    </source>
</reference>
<reference key="2">
    <citation type="journal article" date="2011" name="J. Bacteriol.">
        <title>Revised genome sequence of Brucella suis 1330.</title>
        <authorList>
            <person name="Tae H."/>
            <person name="Shallom S."/>
            <person name="Settlage R."/>
            <person name="Preston D."/>
            <person name="Adams L.G."/>
            <person name="Garner H.R."/>
        </authorList>
    </citation>
    <scope>NUCLEOTIDE SEQUENCE [LARGE SCALE GENOMIC DNA]</scope>
    <source>
        <strain>1330</strain>
    </source>
</reference>
<feature type="chain" id="PRO_0000188037" description="Acyl-[acyl-carrier-protein]--UDP-N-acetylglucosamine O-acyltransferase">
    <location>
        <begin position="1"/>
        <end position="278"/>
    </location>
</feature>
<proteinExistence type="inferred from homology"/>
<organism>
    <name type="scientific">Brucella suis biovar 1 (strain 1330)</name>
    <dbReference type="NCBI Taxonomy" id="204722"/>
    <lineage>
        <taxon>Bacteria</taxon>
        <taxon>Pseudomonadati</taxon>
        <taxon>Pseudomonadota</taxon>
        <taxon>Alphaproteobacteria</taxon>
        <taxon>Hyphomicrobiales</taxon>
        <taxon>Brucellaceae</taxon>
        <taxon>Brucella/Ochrobactrum group</taxon>
        <taxon>Brucella</taxon>
    </lineage>
</organism>
<protein>
    <recommendedName>
        <fullName evidence="1">Acyl-[acyl-carrier-protein]--UDP-N-acetylglucosamine O-acyltransferase</fullName>
        <shortName evidence="1">UDP-N-acetylglucosamine acyltransferase</shortName>
        <ecNumber evidence="1">2.3.1.129</ecNumber>
    </recommendedName>
</protein>
<comment type="function">
    <text evidence="1">Involved in the biosynthesis of lipid A, a phosphorylated glycolipid that anchors the lipopolysaccharide to the outer membrane of the cell.</text>
</comment>
<comment type="catalytic activity">
    <reaction evidence="1">
        <text>a (3R)-hydroxyacyl-[ACP] + UDP-N-acetyl-alpha-D-glucosamine = a UDP-3-O-[(3R)-3-hydroxyacyl]-N-acetyl-alpha-D-glucosamine + holo-[ACP]</text>
        <dbReference type="Rhea" id="RHEA:67812"/>
        <dbReference type="Rhea" id="RHEA-COMP:9685"/>
        <dbReference type="Rhea" id="RHEA-COMP:9945"/>
        <dbReference type="ChEBI" id="CHEBI:57705"/>
        <dbReference type="ChEBI" id="CHEBI:64479"/>
        <dbReference type="ChEBI" id="CHEBI:78827"/>
        <dbReference type="ChEBI" id="CHEBI:173225"/>
        <dbReference type="EC" id="2.3.1.129"/>
    </reaction>
</comment>
<comment type="pathway">
    <text evidence="1">Glycolipid biosynthesis; lipid IV(A) biosynthesis; lipid IV(A) from (3R)-3-hydroxytetradecanoyl-[acyl-carrier-protein] and UDP-N-acetyl-alpha-D-glucosamine: step 1/6.</text>
</comment>
<comment type="subunit">
    <text evidence="1">Homotrimer.</text>
</comment>
<comment type="subcellular location">
    <subcellularLocation>
        <location evidence="1">Cytoplasm</location>
    </subcellularLocation>
</comment>
<comment type="similarity">
    <text evidence="1">Belongs to the transferase hexapeptide repeat family. LpxA subfamily.</text>
</comment>
<name>LPXA_BRUSU</name>
<accession>P65321</accession>
<accession>G0KA73</accession>
<accession>Q8YHG8</accession>
<sequence>MKETFIHPTALVEPGVELGQGVSVGPFCHVQSGAIIGNDCELMSHVVITGATTLGAGTKVYPHAILGCDPQNNKHKGGPTRLNVGVNCIIREGVTMHKGSDNARGYTSIGDNCSFLAYAHVAHDCDIGDYVTFSNNVMIGGHTSIGHHAILGGGAAVHQFVRVGHHAFIGGLAAVVSDLIPYGMAIGVHAHLGGLNIIGMKRSGMERKEIHNLRHAVRMLFDRTKPIRQRAQDVLAAIPDSPTVSDMISFINVDTKRAYCTPPLDAAHGGAGHDSDED</sequence>
<evidence type="ECO:0000255" key="1">
    <source>
        <dbReference type="HAMAP-Rule" id="MF_00387"/>
    </source>
</evidence>
<gene>
    <name evidence="1" type="primary">lpxA</name>
    <name type="ordered locus">BR1151</name>
    <name type="ordered locus">BS1330_I1147</name>
</gene>
<keyword id="KW-0012">Acyltransferase</keyword>
<keyword id="KW-0963">Cytoplasm</keyword>
<keyword id="KW-0441">Lipid A biosynthesis</keyword>
<keyword id="KW-0444">Lipid biosynthesis</keyword>
<keyword id="KW-0443">Lipid metabolism</keyword>
<keyword id="KW-0677">Repeat</keyword>
<keyword id="KW-0808">Transferase</keyword>